<protein>
    <recommendedName>
        <fullName evidence="1">ATP-dependent Clp protease proteolytic subunit</fullName>
        <ecNumber evidence="1">3.4.21.92</ecNumber>
    </recommendedName>
    <alternativeName>
        <fullName evidence="1">Endopeptidase Clp</fullName>
    </alternativeName>
</protein>
<reference key="1">
    <citation type="submission" date="2008-05" db="EMBL/GenBank/DDBJ databases">
        <title>Genome sequence of Helicobacter pylori from the remote Amazon: traces of Asian ancestry of the first Americans.</title>
        <authorList>
            <person name="Kersulyte D."/>
            <person name="Kalia A."/>
            <person name="Gilman R.H."/>
            <person name="Berg D.E."/>
        </authorList>
    </citation>
    <scope>NUCLEOTIDE SEQUENCE [LARGE SCALE GENOMIC DNA]</scope>
    <source>
        <strain>Shi470</strain>
    </source>
</reference>
<accession>B2UT37</accession>
<sequence length="195" mass="21395">MGYIPYVIENTDRGERSYDIYSRLLKDRIVLLSGEINDSVASSIVAQLLFLEAEDPEKDIGLYINSPGGVITSGLSIYDTMNFIRPDVSTICIGQAASMGAFLLSCGAKGKRFSLPHSRIMIHQPLGGAQGQASDIEIISNEILRLKGLMNSILAQNSGQSLEQIAKDTDRDFYMSAKEAKEYGLIDKVLEKNVK</sequence>
<comment type="function">
    <text evidence="1">Cleaves peptides in various proteins in a process that requires ATP hydrolysis. Has a chymotrypsin-like activity. Plays a major role in the degradation of misfolded proteins.</text>
</comment>
<comment type="catalytic activity">
    <reaction evidence="1">
        <text>Hydrolysis of proteins to small peptides in the presence of ATP and magnesium. alpha-casein is the usual test substrate. In the absence of ATP, only oligopeptides shorter than five residues are hydrolyzed (such as succinyl-Leu-Tyr-|-NHMec, and Leu-Tyr-Leu-|-Tyr-Trp, in which cleavage of the -Tyr-|-Leu- and -Tyr-|-Trp bonds also occurs).</text>
        <dbReference type="EC" id="3.4.21.92"/>
    </reaction>
</comment>
<comment type="subunit">
    <text evidence="1">Fourteen ClpP subunits assemble into 2 heptameric rings which stack back to back to give a disk-like structure with a central cavity, resembling the structure of eukaryotic proteasomes.</text>
</comment>
<comment type="subcellular location">
    <subcellularLocation>
        <location evidence="1">Cytoplasm</location>
    </subcellularLocation>
</comment>
<comment type="similarity">
    <text evidence="1">Belongs to the peptidase S14 family.</text>
</comment>
<name>CLPP_HELPS</name>
<dbReference type="EC" id="3.4.21.92" evidence="1"/>
<dbReference type="EMBL" id="CP001072">
    <property type="protein sequence ID" value="ACD48019.1"/>
    <property type="molecule type" value="Genomic_DNA"/>
</dbReference>
<dbReference type="RefSeq" id="WP_000540571.1">
    <property type="nucleotide sequence ID" value="NC_010698.2"/>
</dbReference>
<dbReference type="SMR" id="B2UT37"/>
<dbReference type="MEROPS" id="S14.001"/>
<dbReference type="KEGG" id="hps:HPSH_02845"/>
<dbReference type="HOGENOM" id="CLU_058707_3_2_7"/>
<dbReference type="GO" id="GO:0005737">
    <property type="term" value="C:cytoplasm"/>
    <property type="evidence" value="ECO:0007669"/>
    <property type="project" value="UniProtKB-SubCell"/>
</dbReference>
<dbReference type="GO" id="GO:0009368">
    <property type="term" value="C:endopeptidase Clp complex"/>
    <property type="evidence" value="ECO:0007669"/>
    <property type="project" value="TreeGrafter"/>
</dbReference>
<dbReference type="GO" id="GO:0004176">
    <property type="term" value="F:ATP-dependent peptidase activity"/>
    <property type="evidence" value="ECO:0007669"/>
    <property type="project" value="InterPro"/>
</dbReference>
<dbReference type="GO" id="GO:0051117">
    <property type="term" value="F:ATPase binding"/>
    <property type="evidence" value="ECO:0007669"/>
    <property type="project" value="TreeGrafter"/>
</dbReference>
<dbReference type="GO" id="GO:0004252">
    <property type="term" value="F:serine-type endopeptidase activity"/>
    <property type="evidence" value="ECO:0007669"/>
    <property type="project" value="UniProtKB-UniRule"/>
</dbReference>
<dbReference type="GO" id="GO:0006515">
    <property type="term" value="P:protein quality control for misfolded or incompletely synthesized proteins"/>
    <property type="evidence" value="ECO:0007669"/>
    <property type="project" value="TreeGrafter"/>
</dbReference>
<dbReference type="CDD" id="cd07017">
    <property type="entry name" value="S14_ClpP_2"/>
    <property type="match status" value="1"/>
</dbReference>
<dbReference type="FunFam" id="3.90.226.10:FF:000001">
    <property type="entry name" value="ATP-dependent Clp protease proteolytic subunit"/>
    <property type="match status" value="1"/>
</dbReference>
<dbReference type="Gene3D" id="3.90.226.10">
    <property type="entry name" value="2-enoyl-CoA Hydratase, Chain A, domain 1"/>
    <property type="match status" value="1"/>
</dbReference>
<dbReference type="HAMAP" id="MF_00444">
    <property type="entry name" value="ClpP"/>
    <property type="match status" value="1"/>
</dbReference>
<dbReference type="InterPro" id="IPR001907">
    <property type="entry name" value="ClpP"/>
</dbReference>
<dbReference type="InterPro" id="IPR029045">
    <property type="entry name" value="ClpP/crotonase-like_dom_sf"/>
</dbReference>
<dbReference type="InterPro" id="IPR023562">
    <property type="entry name" value="ClpP/TepA"/>
</dbReference>
<dbReference type="InterPro" id="IPR033135">
    <property type="entry name" value="ClpP_His_AS"/>
</dbReference>
<dbReference type="InterPro" id="IPR018215">
    <property type="entry name" value="ClpP_Ser_AS"/>
</dbReference>
<dbReference type="NCBIfam" id="TIGR00493">
    <property type="entry name" value="clpP"/>
    <property type="match status" value="1"/>
</dbReference>
<dbReference type="NCBIfam" id="NF001368">
    <property type="entry name" value="PRK00277.1"/>
    <property type="match status" value="1"/>
</dbReference>
<dbReference type="NCBIfam" id="NF009205">
    <property type="entry name" value="PRK12553.1"/>
    <property type="match status" value="1"/>
</dbReference>
<dbReference type="PANTHER" id="PTHR10381">
    <property type="entry name" value="ATP-DEPENDENT CLP PROTEASE PROTEOLYTIC SUBUNIT"/>
    <property type="match status" value="1"/>
</dbReference>
<dbReference type="PANTHER" id="PTHR10381:SF70">
    <property type="entry name" value="ATP-DEPENDENT CLP PROTEASE PROTEOLYTIC SUBUNIT"/>
    <property type="match status" value="1"/>
</dbReference>
<dbReference type="Pfam" id="PF00574">
    <property type="entry name" value="CLP_protease"/>
    <property type="match status" value="1"/>
</dbReference>
<dbReference type="PRINTS" id="PR00127">
    <property type="entry name" value="CLPPROTEASEP"/>
</dbReference>
<dbReference type="SUPFAM" id="SSF52096">
    <property type="entry name" value="ClpP/crotonase"/>
    <property type="match status" value="1"/>
</dbReference>
<dbReference type="PROSITE" id="PS00382">
    <property type="entry name" value="CLP_PROTEASE_HIS"/>
    <property type="match status" value="1"/>
</dbReference>
<dbReference type="PROSITE" id="PS00381">
    <property type="entry name" value="CLP_PROTEASE_SER"/>
    <property type="match status" value="1"/>
</dbReference>
<proteinExistence type="inferred from homology"/>
<keyword id="KW-0963">Cytoplasm</keyword>
<keyword id="KW-0378">Hydrolase</keyword>
<keyword id="KW-0645">Protease</keyword>
<keyword id="KW-0720">Serine protease</keyword>
<organism>
    <name type="scientific">Helicobacter pylori (strain Shi470)</name>
    <dbReference type="NCBI Taxonomy" id="512562"/>
    <lineage>
        <taxon>Bacteria</taxon>
        <taxon>Pseudomonadati</taxon>
        <taxon>Campylobacterota</taxon>
        <taxon>Epsilonproteobacteria</taxon>
        <taxon>Campylobacterales</taxon>
        <taxon>Helicobacteraceae</taxon>
        <taxon>Helicobacter</taxon>
    </lineage>
</organism>
<evidence type="ECO:0000255" key="1">
    <source>
        <dbReference type="HAMAP-Rule" id="MF_00444"/>
    </source>
</evidence>
<feature type="chain" id="PRO_1000189648" description="ATP-dependent Clp protease proteolytic subunit">
    <location>
        <begin position="1"/>
        <end position="195"/>
    </location>
</feature>
<feature type="active site" description="Nucleophile" evidence="1">
    <location>
        <position position="98"/>
    </location>
</feature>
<feature type="active site" evidence="1">
    <location>
        <position position="123"/>
    </location>
</feature>
<gene>
    <name evidence="1" type="primary">clpP</name>
    <name type="ordered locus">HPSH_02845</name>
</gene>